<organism>
    <name type="scientific">Rickettsia massiliae (strain Mtu5)</name>
    <dbReference type="NCBI Taxonomy" id="416276"/>
    <lineage>
        <taxon>Bacteria</taxon>
        <taxon>Pseudomonadati</taxon>
        <taxon>Pseudomonadota</taxon>
        <taxon>Alphaproteobacteria</taxon>
        <taxon>Rickettsiales</taxon>
        <taxon>Rickettsiaceae</taxon>
        <taxon>Rickettsieae</taxon>
        <taxon>Rickettsia</taxon>
        <taxon>spotted fever group</taxon>
    </lineage>
</organism>
<dbReference type="EC" id="5.1.3.2"/>
<dbReference type="EMBL" id="CP000683">
    <property type="protein sequence ID" value="ABV84691.1"/>
    <property type="status" value="ALT_INIT"/>
    <property type="molecule type" value="Genomic_DNA"/>
</dbReference>
<dbReference type="RefSeq" id="WP_014365967.1">
    <property type="nucleotide sequence ID" value="NC_009900.1"/>
</dbReference>
<dbReference type="SMR" id="A8F1A5"/>
<dbReference type="KEGG" id="rms:RMA_0474"/>
<dbReference type="HOGENOM" id="CLU_013560_4_1_5"/>
<dbReference type="Proteomes" id="UP000001311">
    <property type="component" value="Chromosome"/>
</dbReference>
<dbReference type="GO" id="GO:0003978">
    <property type="term" value="F:UDP-glucose 4-epimerase activity"/>
    <property type="evidence" value="ECO:0007669"/>
    <property type="project" value="UniProtKB-EC"/>
</dbReference>
<dbReference type="GO" id="GO:0009103">
    <property type="term" value="P:lipopolysaccharide biosynthetic process"/>
    <property type="evidence" value="ECO:0007669"/>
    <property type="project" value="UniProtKB-KW"/>
</dbReference>
<dbReference type="CDD" id="cd05237">
    <property type="entry name" value="UDP_invert_4-6DH_SDR_e"/>
    <property type="match status" value="1"/>
</dbReference>
<dbReference type="Gene3D" id="3.40.50.720">
    <property type="entry name" value="NAD(P)-binding Rossmann-like Domain"/>
    <property type="match status" value="1"/>
</dbReference>
<dbReference type="InterPro" id="IPR013692">
    <property type="entry name" value="CapD_C"/>
</dbReference>
<dbReference type="InterPro" id="IPR036291">
    <property type="entry name" value="NAD(P)-bd_dom_sf"/>
</dbReference>
<dbReference type="InterPro" id="IPR003869">
    <property type="entry name" value="Polysac_CapD-like"/>
</dbReference>
<dbReference type="InterPro" id="IPR051203">
    <property type="entry name" value="Polysaccharide_Synthase-Rel"/>
</dbReference>
<dbReference type="PANTHER" id="PTHR43318">
    <property type="entry name" value="UDP-N-ACETYLGLUCOSAMINE 4,6-DEHYDRATASE"/>
    <property type="match status" value="1"/>
</dbReference>
<dbReference type="PANTHER" id="PTHR43318:SF2">
    <property type="entry name" value="UDP-N-ACETYLGLUCOSAMINE 4,6-DEHYDRATASE (INVERTING)"/>
    <property type="match status" value="1"/>
</dbReference>
<dbReference type="Pfam" id="PF08485">
    <property type="entry name" value="Polysacc_syn_2C"/>
    <property type="match status" value="1"/>
</dbReference>
<dbReference type="Pfam" id="PF02719">
    <property type="entry name" value="Polysacc_synt_2"/>
    <property type="match status" value="1"/>
</dbReference>
<dbReference type="SUPFAM" id="SSF51735">
    <property type="entry name" value="NAD(P)-binding Rossmann-fold domains"/>
    <property type="match status" value="1"/>
</dbReference>
<proteinExistence type="inferred from homology"/>
<name>CAPD_RICM5</name>
<accession>A8F1A5</accession>
<evidence type="ECO:0000250" key="1"/>
<evidence type="ECO:0000305" key="2"/>
<keyword id="KW-0413">Isomerase</keyword>
<keyword id="KW-0448">Lipopolysaccharide biosynthesis</keyword>
<feature type="chain" id="PRO_0000314605" description="UDP-glucose 4-epimerase">
    <location>
        <begin position="1"/>
        <end position="341"/>
    </location>
</feature>
<reference key="1">
    <citation type="journal article" date="2007" name="Genome Res.">
        <title>Lateral gene transfer between obligate intracellular bacteria: evidence from the Rickettsia massiliae genome.</title>
        <authorList>
            <person name="Blanc G."/>
            <person name="Ogata H."/>
            <person name="Robert C."/>
            <person name="Audic S."/>
            <person name="Claverie J.-M."/>
            <person name="Raoult D."/>
        </authorList>
    </citation>
    <scope>NUCLEOTIDE SEQUENCE [LARGE SCALE GENOMIC DNA]</scope>
    <source>
        <strain>Mtu5</strain>
    </source>
</reference>
<comment type="function">
    <text evidence="1">Epimerizes UDP-galactose to UDP-glucose.</text>
</comment>
<comment type="catalytic activity">
    <reaction>
        <text>UDP-alpha-D-glucose = UDP-alpha-D-galactose</text>
        <dbReference type="Rhea" id="RHEA:22168"/>
        <dbReference type="ChEBI" id="CHEBI:58885"/>
        <dbReference type="ChEBI" id="CHEBI:66914"/>
        <dbReference type="EC" id="5.1.3.2"/>
    </reaction>
</comment>
<comment type="similarity">
    <text evidence="2">Belongs to the polysaccharide synthase family.</text>
</comment>
<comment type="sequence caution" evidence="2">
    <conflict type="erroneous initiation">
        <sequence resource="EMBL-CDS" id="ABV84691"/>
    </conflict>
</comment>
<sequence>MFVDKTLMITGGTGSFGNAVLSRFLKSDIINDIKEIRIFSRDEKKQEDMRIAFNNPKLKCYIGDVRNYKSIDEAMHGVDYVFHAAALKQVPTCEFYPMEAINTNVLGAENVLSAAINNKVTKVIVLSTDKAVYPINAMGLSKALMEKLAIAKARMRSPGETVLCVTRYGNVMASRGSVIPLFINQIKQGKELTITEPSMTRFLMSLVDSVDLVLYAFEHGHQGDIFVQKSPASTIEVLAKALQDIFDSKNEIRFIGTRHGEKHYESLVSSEEMAKADDLRDYYRIPMDGRDLNYAKYFVEGEKKVALLEDYTSHNTKRLNLEEVKELLLTLDYVQEELKNA</sequence>
<gene>
    <name type="primary">capD</name>
    <name type="ordered locus">RMA_0474</name>
</gene>
<protein>
    <recommendedName>
        <fullName>UDP-glucose 4-epimerase</fullName>
        <ecNumber>5.1.3.2</ecNumber>
    </recommendedName>
    <alternativeName>
        <fullName>Galactowaldenase</fullName>
    </alternativeName>
    <alternativeName>
        <fullName>UDP-galactose 4-epimerase</fullName>
    </alternativeName>
</protein>